<comment type="function">
    <text evidence="1">Antibacterial activity against Gram-positive bacterium S.aureus and Gram-negative bacterium E.coli. Has activity against C.albicans.</text>
</comment>
<comment type="subcellular location">
    <subcellularLocation>
        <location evidence="2">Secreted</location>
    </subcellularLocation>
</comment>
<comment type="tissue specificity">
    <text evidence="5">Expressed by the skin glands.</text>
</comment>
<comment type="mass spectrometry" mass="2109.0" error="0.02" method="Electrospray" evidence="2"/>
<comment type="similarity">
    <text evidence="4">Belongs to the frog skin active peptide (FSAP) family. Brevinin subfamily.</text>
</comment>
<organism>
    <name type="scientific">Lithobates clamitans</name>
    <name type="common">Green frog</name>
    <name type="synonym">Rana clamitans</name>
    <dbReference type="NCBI Taxonomy" id="145282"/>
    <lineage>
        <taxon>Eukaryota</taxon>
        <taxon>Metazoa</taxon>
        <taxon>Chordata</taxon>
        <taxon>Craniata</taxon>
        <taxon>Vertebrata</taxon>
        <taxon>Euteleostomi</taxon>
        <taxon>Amphibia</taxon>
        <taxon>Batrachia</taxon>
        <taxon>Anura</taxon>
        <taxon>Neobatrachia</taxon>
        <taxon>Ranoidea</taxon>
        <taxon>Ranidae</taxon>
        <taxon>Lithobates</taxon>
    </lineage>
</organism>
<reference key="1">
    <citation type="journal article" date="2000" name="Peptides">
        <title>Purification and characterization of antimicrobial peptides from the skin of the North American green frog Rana clamitans.</title>
        <authorList>
            <person name="Halverson T."/>
            <person name="Basir Y.J."/>
            <person name="Knoop F.C."/>
            <person name="Conlon J.M."/>
        </authorList>
    </citation>
    <scope>PROTEIN SEQUENCE</scope>
    <scope>MASS SPECTROMETRY</scope>
    <scope>SUBCELLULAR LOCATION</scope>
    <source>
        <tissue>Skin secretion</tissue>
    </source>
</reference>
<feature type="peptide" id="PRO_0000043557" description="Ranalexin-1Cb" evidence="2">
    <location>
        <begin position="1"/>
        <end position="20"/>
    </location>
</feature>
<feature type="disulfide bond" evidence="2">
    <location>
        <begin position="14"/>
        <end position="20"/>
    </location>
</feature>
<evidence type="ECO:0000250" key="1">
    <source>
        <dbReference type="UniProtKB" id="P82876"/>
    </source>
</evidence>
<evidence type="ECO:0000269" key="2">
    <source>
    </source>
</evidence>
<evidence type="ECO:0000303" key="3">
    <source>
    </source>
</evidence>
<evidence type="ECO:0000305" key="4"/>
<evidence type="ECO:0000305" key="5">
    <source>
    </source>
</evidence>
<protein>
    <recommendedName>
        <fullName evidence="3">Ranalexin-1Cb</fullName>
    </recommendedName>
</protein>
<name>RLCB_LITCL</name>
<dbReference type="GO" id="GO:0005576">
    <property type="term" value="C:extracellular region"/>
    <property type="evidence" value="ECO:0007669"/>
    <property type="project" value="UniProtKB-SubCell"/>
</dbReference>
<dbReference type="GO" id="GO:0042742">
    <property type="term" value="P:defense response to bacterium"/>
    <property type="evidence" value="ECO:0007669"/>
    <property type="project" value="UniProtKB-KW"/>
</dbReference>
<dbReference type="GO" id="GO:0050832">
    <property type="term" value="P:defense response to fungus"/>
    <property type="evidence" value="ECO:0007669"/>
    <property type="project" value="UniProtKB-KW"/>
</dbReference>
<dbReference type="GO" id="GO:0031640">
    <property type="term" value="P:killing of cells of another organism"/>
    <property type="evidence" value="ECO:0007669"/>
    <property type="project" value="UniProtKB-KW"/>
</dbReference>
<dbReference type="InterPro" id="IPR012520">
    <property type="entry name" value="Antimicrobial_frog_1"/>
</dbReference>
<dbReference type="Pfam" id="PF08018">
    <property type="entry name" value="Antimicrobial_1"/>
    <property type="match status" value="1"/>
</dbReference>
<sequence length="20" mass="2112">FLGGLMKAFPAIICAVTKKC</sequence>
<proteinExistence type="evidence at protein level"/>
<accession>P82877</accession>
<keyword id="KW-0878">Amphibian defense peptide</keyword>
<keyword id="KW-0044">Antibiotic</keyword>
<keyword id="KW-0929">Antimicrobial</keyword>
<keyword id="KW-0903">Direct protein sequencing</keyword>
<keyword id="KW-1015">Disulfide bond</keyword>
<keyword id="KW-0295">Fungicide</keyword>
<keyword id="KW-0964">Secreted</keyword>